<sequence length="383" mass="41668">MSWQDKIAQGLQRRRDAAAYRTRQVNEGANGRWLQSGERQYLNFSSNDYLGLSQNDEVIAAWQQGARRYGVGSGGSGHVTGYSQPHARLEQQLADWLGYPRALLFISGYAANQAVLTALTDADDRILADKLSHASLLEAAAHSPAQLRRFQHNQPEALQNLLIKPCQGQTLVVTEGVFSMDGDSAPLAALQQQTSAAGGWLLVDDAHGIGVHGEEGRGSCWLQGVQPELLVVTFGKAFGLSGAAVLCQEPVAEYLLQYARHLIYSTAMPPAQACALQAALRQVQQGDALRQQLQQRIRQFRTAAAHLPLQLGASKTAIQPLLVGDNQQSLIWAEQLRAAGLWVTAIRPPTVPPGSARLRITLSAAHQPEDIDRLLEVLYGLCH</sequence>
<proteinExistence type="inferred from homology"/>
<name>BIOF_YERPB</name>
<evidence type="ECO:0000255" key="1">
    <source>
        <dbReference type="HAMAP-Rule" id="MF_01693"/>
    </source>
</evidence>
<keyword id="KW-0093">Biotin biosynthesis</keyword>
<keyword id="KW-0663">Pyridoxal phosphate</keyword>
<keyword id="KW-0808">Transferase</keyword>
<accession>B2K8T1</accession>
<dbReference type="EC" id="2.3.1.47" evidence="1"/>
<dbReference type="EMBL" id="CP001048">
    <property type="protein sequence ID" value="ACC88237.1"/>
    <property type="molecule type" value="Genomic_DNA"/>
</dbReference>
<dbReference type="RefSeq" id="WP_011191957.1">
    <property type="nucleotide sequence ID" value="NZ_CP009780.1"/>
</dbReference>
<dbReference type="SMR" id="B2K8T1"/>
<dbReference type="KEGG" id="ypb:YPTS_1262"/>
<dbReference type="PATRIC" id="fig|502801.10.peg.611"/>
<dbReference type="UniPathway" id="UPA00078"/>
<dbReference type="GO" id="GO:0008710">
    <property type="term" value="F:8-amino-7-oxononanoate synthase activity"/>
    <property type="evidence" value="ECO:0007669"/>
    <property type="project" value="UniProtKB-UniRule"/>
</dbReference>
<dbReference type="GO" id="GO:0030170">
    <property type="term" value="F:pyridoxal phosphate binding"/>
    <property type="evidence" value="ECO:0007669"/>
    <property type="project" value="UniProtKB-UniRule"/>
</dbReference>
<dbReference type="GO" id="GO:0009102">
    <property type="term" value="P:biotin biosynthetic process"/>
    <property type="evidence" value="ECO:0007669"/>
    <property type="project" value="UniProtKB-UniRule"/>
</dbReference>
<dbReference type="Gene3D" id="3.90.1150.10">
    <property type="entry name" value="Aspartate Aminotransferase, domain 1"/>
    <property type="match status" value="1"/>
</dbReference>
<dbReference type="Gene3D" id="3.40.640.10">
    <property type="entry name" value="Type I PLP-dependent aspartate aminotransferase-like (Major domain)"/>
    <property type="match status" value="1"/>
</dbReference>
<dbReference type="HAMAP" id="MF_01693">
    <property type="entry name" value="BioF_aminotrans_2"/>
    <property type="match status" value="1"/>
</dbReference>
<dbReference type="InterPro" id="IPR001917">
    <property type="entry name" value="Aminotrans_II_pyridoxalP_BS"/>
</dbReference>
<dbReference type="InterPro" id="IPR004839">
    <property type="entry name" value="Aminotransferase_I/II_large"/>
</dbReference>
<dbReference type="InterPro" id="IPR050087">
    <property type="entry name" value="AON_synthase_class-II"/>
</dbReference>
<dbReference type="InterPro" id="IPR004723">
    <property type="entry name" value="AONS_Archaea/Proteobacteria"/>
</dbReference>
<dbReference type="InterPro" id="IPR022834">
    <property type="entry name" value="AONS_Proteobacteria"/>
</dbReference>
<dbReference type="InterPro" id="IPR015424">
    <property type="entry name" value="PyrdxlP-dep_Trfase"/>
</dbReference>
<dbReference type="InterPro" id="IPR015421">
    <property type="entry name" value="PyrdxlP-dep_Trfase_major"/>
</dbReference>
<dbReference type="InterPro" id="IPR015422">
    <property type="entry name" value="PyrdxlP-dep_Trfase_small"/>
</dbReference>
<dbReference type="NCBIfam" id="TIGR00858">
    <property type="entry name" value="bioF"/>
    <property type="match status" value="1"/>
</dbReference>
<dbReference type="PANTHER" id="PTHR13693:SF100">
    <property type="entry name" value="8-AMINO-7-OXONONANOATE SYNTHASE"/>
    <property type="match status" value="1"/>
</dbReference>
<dbReference type="PANTHER" id="PTHR13693">
    <property type="entry name" value="CLASS II AMINOTRANSFERASE/8-AMINO-7-OXONONANOATE SYNTHASE"/>
    <property type="match status" value="1"/>
</dbReference>
<dbReference type="Pfam" id="PF00155">
    <property type="entry name" value="Aminotran_1_2"/>
    <property type="match status" value="1"/>
</dbReference>
<dbReference type="SUPFAM" id="SSF53383">
    <property type="entry name" value="PLP-dependent transferases"/>
    <property type="match status" value="1"/>
</dbReference>
<dbReference type="PROSITE" id="PS00599">
    <property type="entry name" value="AA_TRANSFER_CLASS_2"/>
    <property type="match status" value="1"/>
</dbReference>
<gene>
    <name evidence="1" type="primary">bioF</name>
    <name type="ordered locus">YPTS_1262</name>
</gene>
<organism>
    <name type="scientific">Yersinia pseudotuberculosis serotype IB (strain PB1/+)</name>
    <dbReference type="NCBI Taxonomy" id="502801"/>
    <lineage>
        <taxon>Bacteria</taxon>
        <taxon>Pseudomonadati</taxon>
        <taxon>Pseudomonadota</taxon>
        <taxon>Gammaproteobacteria</taxon>
        <taxon>Enterobacterales</taxon>
        <taxon>Yersiniaceae</taxon>
        <taxon>Yersinia</taxon>
    </lineage>
</organism>
<comment type="function">
    <text evidence="1">Catalyzes the decarboxylative condensation of pimeloyl-[acyl-carrier protein] and L-alanine to produce 8-amino-7-oxononanoate (AON), [acyl-carrier protein], and carbon dioxide.</text>
</comment>
<comment type="catalytic activity">
    <reaction evidence="1">
        <text>6-carboxyhexanoyl-[ACP] + L-alanine + H(+) = (8S)-8-amino-7-oxononanoate + holo-[ACP] + CO2</text>
        <dbReference type="Rhea" id="RHEA:42288"/>
        <dbReference type="Rhea" id="RHEA-COMP:9685"/>
        <dbReference type="Rhea" id="RHEA-COMP:9955"/>
        <dbReference type="ChEBI" id="CHEBI:15378"/>
        <dbReference type="ChEBI" id="CHEBI:16526"/>
        <dbReference type="ChEBI" id="CHEBI:57972"/>
        <dbReference type="ChEBI" id="CHEBI:64479"/>
        <dbReference type="ChEBI" id="CHEBI:78846"/>
        <dbReference type="ChEBI" id="CHEBI:149468"/>
        <dbReference type="EC" id="2.3.1.47"/>
    </reaction>
</comment>
<comment type="cofactor">
    <cofactor evidence="1">
        <name>pyridoxal 5'-phosphate</name>
        <dbReference type="ChEBI" id="CHEBI:597326"/>
    </cofactor>
</comment>
<comment type="pathway">
    <text evidence="1">Cofactor biosynthesis; biotin biosynthesis.</text>
</comment>
<comment type="subunit">
    <text evidence="1">Homodimer.</text>
</comment>
<comment type="similarity">
    <text evidence="1">Belongs to the class-II pyridoxal-phosphate-dependent aminotransferase family. BioF subfamily.</text>
</comment>
<reference key="1">
    <citation type="submission" date="2008-04" db="EMBL/GenBank/DDBJ databases">
        <title>Complete sequence of Yersinia pseudotuberculosis PB1/+.</title>
        <authorList>
            <person name="Copeland A."/>
            <person name="Lucas S."/>
            <person name="Lapidus A."/>
            <person name="Glavina del Rio T."/>
            <person name="Dalin E."/>
            <person name="Tice H."/>
            <person name="Bruce D."/>
            <person name="Goodwin L."/>
            <person name="Pitluck S."/>
            <person name="Munk A.C."/>
            <person name="Brettin T."/>
            <person name="Detter J.C."/>
            <person name="Han C."/>
            <person name="Tapia R."/>
            <person name="Schmutz J."/>
            <person name="Larimer F."/>
            <person name="Land M."/>
            <person name="Hauser L."/>
            <person name="Challacombe J.F."/>
            <person name="Green L."/>
            <person name="Lindler L.E."/>
            <person name="Nikolich M.P."/>
            <person name="Richardson P."/>
        </authorList>
    </citation>
    <scope>NUCLEOTIDE SEQUENCE [LARGE SCALE GENOMIC DNA]</scope>
    <source>
        <strain>PB1/+</strain>
    </source>
</reference>
<feature type="chain" id="PRO_0000381155" description="8-amino-7-oxononanoate synthase">
    <location>
        <begin position="1"/>
        <end position="383"/>
    </location>
</feature>
<feature type="binding site" evidence="1">
    <location>
        <position position="21"/>
    </location>
    <ligand>
        <name>substrate</name>
    </ligand>
</feature>
<feature type="binding site" evidence="1">
    <location>
        <begin position="108"/>
        <end position="109"/>
    </location>
    <ligand>
        <name>pyridoxal 5'-phosphate</name>
        <dbReference type="ChEBI" id="CHEBI:597326"/>
    </ligand>
</feature>
<feature type="binding site" evidence="1">
    <location>
        <position position="133"/>
    </location>
    <ligand>
        <name>substrate</name>
    </ligand>
</feature>
<feature type="binding site" evidence="1">
    <location>
        <position position="179"/>
    </location>
    <ligand>
        <name>pyridoxal 5'-phosphate</name>
        <dbReference type="ChEBI" id="CHEBI:597326"/>
    </ligand>
</feature>
<feature type="binding site" evidence="1">
    <location>
        <position position="207"/>
    </location>
    <ligand>
        <name>pyridoxal 5'-phosphate</name>
        <dbReference type="ChEBI" id="CHEBI:597326"/>
    </ligand>
</feature>
<feature type="binding site" evidence="1">
    <location>
        <position position="233"/>
    </location>
    <ligand>
        <name>pyridoxal 5'-phosphate</name>
        <dbReference type="ChEBI" id="CHEBI:597326"/>
    </ligand>
</feature>
<feature type="binding site" evidence="1">
    <location>
        <position position="350"/>
    </location>
    <ligand>
        <name>substrate</name>
    </ligand>
</feature>
<feature type="modified residue" description="N6-(pyridoxal phosphate)lysine" evidence="1">
    <location>
        <position position="236"/>
    </location>
</feature>
<protein>
    <recommendedName>
        <fullName evidence="1">8-amino-7-oxononanoate synthase</fullName>
        <shortName evidence="1">AONS</shortName>
        <ecNumber evidence="1">2.3.1.47</ecNumber>
    </recommendedName>
    <alternativeName>
        <fullName evidence="1">7-keto-8-amino-pelargonic acid synthase</fullName>
        <shortName evidence="1">7-KAP synthase</shortName>
        <shortName evidence="1">KAPA synthase</shortName>
    </alternativeName>
    <alternativeName>
        <fullName evidence="1">8-amino-7-ketopelargonate synthase</fullName>
    </alternativeName>
</protein>